<proteinExistence type="inferred from homology"/>
<dbReference type="EC" id="2.3.1.20" evidence="1"/>
<dbReference type="EMBL" id="LT708304">
    <property type="protein sequence ID" value="SIU00918.1"/>
    <property type="molecule type" value="Genomic_DNA"/>
</dbReference>
<dbReference type="RefSeq" id="NP_855955.1">
    <property type="nucleotide sequence ID" value="NC_002945.3"/>
</dbReference>
<dbReference type="RefSeq" id="WP_003411704.1">
    <property type="nucleotide sequence ID" value="NC_002945.4"/>
</dbReference>
<dbReference type="SMR" id="P67207"/>
<dbReference type="KEGG" id="mbo:BQ2027_MB2306"/>
<dbReference type="PATRIC" id="fig|233413.5.peg.2531"/>
<dbReference type="UniPathway" id="UPA00282"/>
<dbReference type="Proteomes" id="UP000001419">
    <property type="component" value="Chromosome"/>
</dbReference>
<dbReference type="GO" id="GO:0005886">
    <property type="term" value="C:plasma membrane"/>
    <property type="evidence" value="ECO:0007669"/>
    <property type="project" value="TreeGrafter"/>
</dbReference>
<dbReference type="GO" id="GO:0004144">
    <property type="term" value="F:diacylglycerol O-acyltransferase activity"/>
    <property type="evidence" value="ECO:0007669"/>
    <property type="project" value="UniProtKB-EC"/>
</dbReference>
<dbReference type="GO" id="GO:0051701">
    <property type="term" value="P:biological process involved in interaction with host"/>
    <property type="evidence" value="ECO:0007669"/>
    <property type="project" value="TreeGrafter"/>
</dbReference>
<dbReference type="GO" id="GO:0006071">
    <property type="term" value="P:glycerol metabolic process"/>
    <property type="evidence" value="ECO:0007669"/>
    <property type="project" value="UniProtKB-KW"/>
</dbReference>
<dbReference type="GO" id="GO:0001666">
    <property type="term" value="P:response to hypoxia"/>
    <property type="evidence" value="ECO:0007669"/>
    <property type="project" value="TreeGrafter"/>
</dbReference>
<dbReference type="GO" id="GO:0071731">
    <property type="term" value="P:response to nitric oxide"/>
    <property type="evidence" value="ECO:0007669"/>
    <property type="project" value="TreeGrafter"/>
</dbReference>
<dbReference type="GO" id="GO:0019432">
    <property type="term" value="P:triglyceride biosynthetic process"/>
    <property type="evidence" value="ECO:0007669"/>
    <property type="project" value="UniProtKB-UniPathway"/>
</dbReference>
<dbReference type="InterPro" id="IPR014292">
    <property type="entry name" value="Acyl_transf_WS/DGAT"/>
</dbReference>
<dbReference type="InterPro" id="IPR045034">
    <property type="entry name" value="O-acyltransferase_WSD1-like"/>
</dbReference>
<dbReference type="InterPro" id="IPR009721">
    <property type="entry name" value="O-acyltransferase_WSD1_C"/>
</dbReference>
<dbReference type="InterPro" id="IPR004255">
    <property type="entry name" value="O-acyltransferase_WSD1_N"/>
</dbReference>
<dbReference type="NCBIfam" id="TIGR02946">
    <property type="entry name" value="acyl_WS_DGAT"/>
    <property type="match status" value="1"/>
</dbReference>
<dbReference type="PANTHER" id="PTHR31650">
    <property type="entry name" value="O-ACYLTRANSFERASE (WSD1-LIKE) FAMILY PROTEIN"/>
    <property type="match status" value="1"/>
</dbReference>
<dbReference type="PANTHER" id="PTHR31650:SF1">
    <property type="entry name" value="WAX ESTER SYNTHASE_DIACYLGLYCEROL ACYLTRANSFERASE 4-RELATED"/>
    <property type="match status" value="1"/>
</dbReference>
<dbReference type="Pfam" id="PF06974">
    <property type="entry name" value="WS_DGAT_C"/>
    <property type="match status" value="1"/>
</dbReference>
<dbReference type="Pfam" id="PF03007">
    <property type="entry name" value="WS_DGAT_cat"/>
    <property type="match status" value="1"/>
</dbReference>
<dbReference type="SUPFAM" id="SSF52777">
    <property type="entry name" value="CoA-dependent acyltransferases"/>
    <property type="match status" value="1"/>
</dbReference>
<feature type="chain" id="PRO_0000222911" description="Putative diacyglycerol O-acyltransferase Mb2306">
    <location>
        <begin position="1"/>
        <end position="445"/>
    </location>
</feature>
<feature type="active site" description="Proton acceptor" evidence="2">
    <location>
        <position position="135"/>
    </location>
</feature>
<comment type="catalytic activity">
    <reaction evidence="1">
        <text>an acyl-CoA + a 1,2-diacyl-sn-glycerol = a triacyl-sn-glycerol + CoA</text>
        <dbReference type="Rhea" id="RHEA:10868"/>
        <dbReference type="ChEBI" id="CHEBI:17815"/>
        <dbReference type="ChEBI" id="CHEBI:57287"/>
        <dbReference type="ChEBI" id="CHEBI:58342"/>
        <dbReference type="ChEBI" id="CHEBI:64615"/>
        <dbReference type="EC" id="2.3.1.20"/>
    </reaction>
</comment>
<comment type="pathway">
    <text>Glycerolipid metabolism; triacylglycerol biosynthesis.</text>
</comment>
<comment type="similarity">
    <text evidence="3">Belongs to the long-chain O-acyltransferase family.</text>
</comment>
<evidence type="ECO:0000250" key="1">
    <source>
        <dbReference type="UniProtKB" id="P9WKC9"/>
    </source>
</evidence>
<evidence type="ECO:0000255" key="2"/>
<evidence type="ECO:0000305" key="3"/>
<name>Y2306_MYCBO</name>
<reference key="1">
    <citation type="journal article" date="2003" name="Proc. Natl. Acad. Sci. U.S.A.">
        <title>The complete genome sequence of Mycobacterium bovis.</title>
        <authorList>
            <person name="Garnier T."/>
            <person name="Eiglmeier K."/>
            <person name="Camus J.-C."/>
            <person name="Medina N."/>
            <person name="Mansoor H."/>
            <person name="Pryor M."/>
            <person name="Duthoy S."/>
            <person name="Grondin S."/>
            <person name="Lacroix C."/>
            <person name="Monsempe C."/>
            <person name="Simon S."/>
            <person name="Harris B."/>
            <person name="Atkin R."/>
            <person name="Doggett J."/>
            <person name="Mayes R."/>
            <person name="Keating L."/>
            <person name="Wheeler P.R."/>
            <person name="Parkhill J."/>
            <person name="Barrell B.G."/>
            <person name="Cole S.T."/>
            <person name="Gordon S.V."/>
            <person name="Hewinson R.G."/>
        </authorList>
    </citation>
    <scope>NUCLEOTIDE SEQUENCE [LARGE SCALE GENOMIC DNA]</scope>
    <source>
        <strain>ATCC BAA-935 / AF2122/97</strain>
    </source>
</reference>
<reference key="2">
    <citation type="journal article" date="2017" name="Genome Announc.">
        <title>Updated reference genome sequence and annotation of Mycobacterium bovis AF2122/97.</title>
        <authorList>
            <person name="Malone K.M."/>
            <person name="Farrell D."/>
            <person name="Stuber T.P."/>
            <person name="Schubert O.T."/>
            <person name="Aebersold R."/>
            <person name="Robbe-Austerman S."/>
            <person name="Gordon S.V."/>
        </authorList>
    </citation>
    <scope>NUCLEOTIDE SEQUENCE [LARGE SCALE GENOMIC DNA]</scope>
    <scope>GENOME REANNOTATION</scope>
    <source>
        <strain>ATCC BAA-935 / AF2122/97</strain>
    </source>
</reference>
<protein>
    <recommendedName>
        <fullName>Putative diacyglycerol O-acyltransferase Mb2306</fullName>
        <ecNumber evidence="1">2.3.1.20</ecNumber>
    </recommendedName>
    <alternativeName>
        <fullName>Putative triacylglycerol synthase Mb2306</fullName>
    </alternativeName>
</protein>
<gene>
    <name type="ordered locus">BQ2027_MB2306</name>
</gene>
<accession>P67207</accession>
<accession>A0A1R3Y0N8</accession>
<accession>Q50680</accession>
<accession>X2BKE0</accession>
<organism>
    <name type="scientific">Mycobacterium bovis (strain ATCC BAA-935 / AF2122/97)</name>
    <dbReference type="NCBI Taxonomy" id="233413"/>
    <lineage>
        <taxon>Bacteria</taxon>
        <taxon>Bacillati</taxon>
        <taxon>Actinomycetota</taxon>
        <taxon>Actinomycetes</taxon>
        <taxon>Mycobacteriales</taxon>
        <taxon>Mycobacteriaceae</taxon>
        <taxon>Mycobacterium</taxon>
        <taxon>Mycobacterium tuberculosis complex</taxon>
    </lineage>
</organism>
<keyword id="KW-0012">Acyltransferase</keyword>
<keyword id="KW-0319">Glycerol metabolism</keyword>
<keyword id="KW-0444">Lipid biosynthesis</keyword>
<keyword id="KW-0443">Lipid metabolism</keyword>
<keyword id="KW-1185">Reference proteome</keyword>
<keyword id="KW-0808">Transferase</keyword>
<sequence length="445" mass="47707">MKLLSPLDQMFARMEAPRTPMHIGAFAVFDLPKGAPRRFIRDLYEAISQLAFLPFPFDSVIAGGASMAYWRQVQPDPSYHVRLSALPYPGTGRDLGALVERLHSTPLDMAKPLWELHLIEGLTGRQFAMYFKAHHCAVDGLGGVNLIKSWLTTDPEAPPGSGKPEPFGDDYDLASVLAAATTKRAVEGVSAVSELAGRLSSMVLGANSSVRAALTTPRTPFNTRVNRHRRLAVQVLKLPRLKAVAHATDCTVNDVILASVGGACRRYLQELGDLPTNTLTASVPVGFERDADTVNAASGFVAPLGTSIEDPVARLTTISASTTRGKAELLAMSPNALQHYSVFGLLPIAVGQKTGALGVIPPLFNFTVSNVVLSKDPLYLSGAKLDVIVPMSFLCDGYGLNVTLVGYTDKVVLGFLGCRDTLPHLQRLAQYTGAAFEELETAALP</sequence>